<name>MMM1_ASPTN</name>
<protein>
    <recommendedName>
        <fullName evidence="1">Maintenance of mitochondrial morphology protein 1</fullName>
    </recommendedName>
</protein>
<reference key="1">
    <citation type="submission" date="2005-09" db="EMBL/GenBank/DDBJ databases">
        <title>Annotation of the Aspergillus terreus NIH2624 genome.</title>
        <authorList>
            <person name="Birren B.W."/>
            <person name="Lander E.S."/>
            <person name="Galagan J.E."/>
            <person name="Nusbaum C."/>
            <person name="Devon K."/>
            <person name="Henn M."/>
            <person name="Ma L.-J."/>
            <person name="Jaffe D.B."/>
            <person name="Butler J."/>
            <person name="Alvarez P."/>
            <person name="Gnerre S."/>
            <person name="Grabherr M."/>
            <person name="Kleber M."/>
            <person name="Mauceli E.W."/>
            <person name="Brockman W."/>
            <person name="Rounsley S."/>
            <person name="Young S.K."/>
            <person name="LaButti K."/>
            <person name="Pushparaj V."/>
            <person name="DeCaprio D."/>
            <person name="Crawford M."/>
            <person name="Koehrsen M."/>
            <person name="Engels R."/>
            <person name="Montgomery P."/>
            <person name="Pearson M."/>
            <person name="Howarth C."/>
            <person name="Larson L."/>
            <person name="Luoma S."/>
            <person name="White J."/>
            <person name="Alvarado L."/>
            <person name="Kodira C.D."/>
            <person name="Zeng Q."/>
            <person name="Oleary S."/>
            <person name="Yandava C."/>
            <person name="Denning D.W."/>
            <person name="Nierman W.C."/>
            <person name="Milne T."/>
            <person name="Madden K."/>
        </authorList>
    </citation>
    <scope>NUCLEOTIDE SEQUENCE [LARGE SCALE GENOMIC DNA]</scope>
    <source>
        <strain>NIH 2624 / FGSC A1156</strain>
    </source>
</reference>
<organism>
    <name type="scientific">Aspergillus terreus (strain NIH 2624 / FGSC A1156)</name>
    <dbReference type="NCBI Taxonomy" id="341663"/>
    <lineage>
        <taxon>Eukaryota</taxon>
        <taxon>Fungi</taxon>
        <taxon>Dikarya</taxon>
        <taxon>Ascomycota</taxon>
        <taxon>Pezizomycotina</taxon>
        <taxon>Eurotiomycetes</taxon>
        <taxon>Eurotiomycetidae</taxon>
        <taxon>Eurotiales</taxon>
        <taxon>Aspergillaceae</taxon>
        <taxon>Aspergillus</taxon>
        <taxon>Aspergillus subgen. Circumdati</taxon>
    </lineage>
</organism>
<sequence length="486" mass="52500">MNFQQSAIPPFSFLLSFTQGFLLGQLSVVLLIGAFIKFFIFGEAPPPPSRGLSHRASTHRRSNSIYTISTNEAGSRSLREKPSTSNVLRPVPSSSTNTRSILRKTYYGAIPTNPSKHGRHRVHHSSHQPESLDWFNVLIAQTIAQYRQTAYLLKDEPTSSILSSLTAALNNPEKKPSFIDKITVTDISLGEEFPIFSNCRIIAVDDPNSDGGRLQALMDVDLSDDNLSIGIETSLLLNYPKPGSAILPVALSISVVRFSGTLCISLVPASTPPLHTPSPSPAPQTADGARTQSQPENNSSNPNQQSADASGAPPKTSPKSNVAFSFLPDYRLDLSVRSLIGSRSRLQDVPKVAQLVEARVHAWFEERVVEPRVQVVGLPDLWPRMGRTGVRTGEDSETGSNAASRSAISADLGSSLRDDLDQGPDGLRFRGPLGARPQFDSVSRSSSFNVETGGFHGHPMTREDSRGAISDDFHMPGSLPDGAVGN</sequence>
<keyword id="KW-0256">Endoplasmic reticulum</keyword>
<keyword id="KW-0445">Lipid transport</keyword>
<keyword id="KW-0446">Lipid-binding</keyword>
<keyword id="KW-0472">Membrane</keyword>
<keyword id="KW-1185">Reference proteome</keyword>
<keyword id="KW-0812">Transmembrane</keyword>
<keyword id="KW-1133">Transmembrane helix</keyword>
<keyword id="KW-0813">Transport</keyword>
<comment type="function">
    <text evidence="1">Component of the ERMES/MDM complex, which serves as a molecular tether to connect the endoplasmic reticulum (ER) and mitochondria. Components of this complex are involved in the control of mitochondrial shape and protein biogenesis, and function in nonvesicular lipid trafficking between the ER and mitochondria. The mdm12-mmm1 subcomplex functions in the major beta-barrel assembly pathway that is responsible for biogenesis of all outer membrane beta-barrel proteins, and acts in a late step after the SAM complex. The mdm10-mdm12-mmm1 subcomplex further acts in the TOM40-specific pathway after the action of the mdm12-mmm1 complex. Essential for establishing and maintaining the structure of mitochondria and maintenance of mtDNA nucleoids.</text>
</comment>
<comment type="subunit">
    <text evidence="1">Homodimer. Component of the ER-mitochondria encounter structure (ERMES) or MDM complex, composed of mmm1, mdm10, mdm12 and mdm34. A mmm1 homodimer associates with one molecule of mdm12 on each side in a pairwise head-to-tail manner, and the SMP-LTD domains of mmm1 and mdm12 generate a continuous hydrophobic tunnel for phospholipid trafficking.</text>
</comment>
<comment type="subcellular location">
    <subcellularLocation>
        <location evidence="1">Endoplasmic reticulum membrane</location>
        <topology evidence="1">Single-pass type I membrane protein</topology>
    </subcellularLocation>
    <text evidence="1">The ERMES/MDM complex localizes to a few discrete foci (around 10 per single cell), that represent mitochondria-endoplasmic reticulum junctions. These foci are often found next to mtDNA nucleoids.</text>
</comment>
<comment type="domain">
    <text evidence="1">The SMP-LTD domain is a barrel-like domain that can bind various types of glycerophospholipids in its interior and mediate their transfer between two adjacent bilayers.</text>
</comment>
<comment type="similarity">
    <text evidence="1">Belongs to the MMM1 family.</text>
</comment>
<comment type="sequence caution" evidence="3">
    <conflict type="erroneous gene model prediction">
        <sequence resource="EMBL-CDS" id="EAU32395"/>
    </conflict>
</comment>
<gene>
    <name evidence="1" type="primary">mmm1</name>
    <name type="ORF">ATEG_07011</name>
</gene>
<evidence type="ECO:0000255" key="1">
    <source>
        <dbReference type="HAMAP-Rule" id="MF_03103"/>
    </source>
</evidence>
<evidence type="ECO:0000256" key="2">
    <source>
        <dbReference type="SAM" id="MobiDB-lite"/>
    </source>
</evidence>
<evidence type="ECO:0000305" key="3"/>
<dbReference type="EMBL" id="CH476603">
    <property type="protein sequence ID" value="EAU32395.1"/>
    <property type="status" value="ALT_SEQ"/>
    <property type="molecule type" value="Genomic_DNA"/>
</dbReference>
<dbReference type="RefSeq" id="XP_001209697.1">
    <property type="nucleotide sequence ID" value="XM_001209697.1"/>
</dbReference>
<dbReference type="SMR" id="Q0CH31"/>
<dbReference type="STRING" id="341663.Q0CH31"/>
<dbReference type="EnsemblFungi" id="EAU32395">
    <property type="protein sequence ID" value="EAU32395"/>
    <property type="gene ID" value="ATEG_07011"/>
</dbReference>
<dbReference type="GeneID" id="4319267"/>
<dbReference type="eggNOG" id="ENOG502QUUW">
    <property type="taxonomic scope" value="Eukaryota"/>
</dbReference>
<dbReference type="OrthoDB" id="5376138at2759"/>
<dbReference type="Proteomes" id="UP000007963">
    <property type="component" value="Unassembled WGS sequence"/>
</dbReference>
<dbReference type="GO" id="GO:0005789">
    <property type="term" value="C:endoplasmic reticulum membrane"/>
    <property type="evidence" value="ECO:0007669"/>
    <property type="project" value="UniProtKB-SubCell"/>
</dbReference>
<dbReference type="GO" id="GO:0032865">
    <property type="term" value="C:ERMES complex"/>
    <property type="evidence" value="ECO:0007669"/>
    <property type="project" value="UniProtKB-UniRule"/>
</dbReference>
<dbReference type="GO" id="GO:0008289">
    <property type="term" value="F:lipid binding"/>
    <property type="evidence" value="ECO:0007669"/>
    <property type="project" value="UniProtKB-KW"/>
</dbReference>
<dbReference type="GO" id="GO:0000002">
    <property type="term" value="P:mitochondrial genome maintenance"/>
    <property type="evidence" value="ECO:0007669"/>
    <property type="project" value="UniProtKB-UniRule"/>
</dbReference>
<dbReference type="GO" id="GO:1990456">
    <property type="term" value="P:mitochondrion-endoplasmic reticulum membrane tethering"/>
    <property type="evidence" value="ECO:0007669"/>
    <property type="project" value="TreeGrafter"/>
</dbReference>
<dbReference type="GO" id="GO:0015914">
    <property type="term" value="P:phospholipid transport"/>
    <property type="evidence" value="ECO:0007669"/>
    <property type="project" value="TreeGrafter"/>
</dbReference>
<dbReference type="GO" id="GO:0045040">
    <property type="term" value="P:protein insertion into mitochondrial outer membrane"/>
    <property type="evidence" value="ECO:0007669"/>
    <property type="project" value="UniProtKB-UniRule"/>
</dbReference>
<dbReference type="CDD" id="cd21671">
    <property type="entry name" value="SMP_Mmm1"/>
    <property type="match status" value="1"/>
</dbReference>
<dbReference type="HAMAP" id="MF_03103">
    <property type="entry name" value="Mmm1"/>
    <property type="match status" value="1"/>
</dbReference>
<dbReference type="InterPro" id="IPR027537">
    <property type="entry name" value="Mmm1"/>
</dbReference>
<dbReference type="InterPro" id="IPR019411">
    <property type="entry name" value="MMM1_dom"/>
</dbReference>
<dbReference type="InterPro" id="IPR031468">
    <property type="entry name" value="SMP_LBD"/>
</dbReference>
<dbReference type="PANTHER" id="PTHR13466:SF0">
    <property type="entry name" value="SMP-LTD DOMAIN-CONTAINING PROTEIN"/>
    <property type="match status" value="1"/>
</dbReference>
<dbReference type="PANTHER" id="PTHR13466">
    <property type="entry name" value="TEX2 PROTEIN-RELATED"/>
    <property type="match status" value="1"/>
</dbReference>
<dbReference type="Pfam" id="PF10296">
    <property type="entry name" value="MMM1"/>
    <property type="match status" value="1"/>
</dbReference>
<dbReference type="PROSITE" id="PS51847">
    <property type="entry name" value="SMP"/>
    <property type="match status" value="1"/>
</dbReference>
<feature type="chain" id="PRO_0000384218" description="Maintenance of mitochondrial morphology protein 1">
    <location>
        <begin position="1"/>
        <end position="486"/>
    </location>
</feature>
<feature type="topological domain" description="Lumenal" evidence="1">
    <location>
        <begin position="1"/>
        <end position="20"/>
    </location>
</feature>
<feature type="transmembrane region" description="Helical" evidence="1">
    <location>
        <begin position="21"/>
        <end position="41"/>
    </location>
</feature>
<feature type="topological domain" description="Cytoplasmic" evidence="1">
    <location>
        <begin position="42"/>
        <end position="486"/>
    </location>
</feature>
<feature type="domain" description="SMP-LTD" evidence="1">
    <location>
        <begin position="128"/>
        <end position="379"/>
    </location>
</feature>
<feature type="region of interest" description="Disordered" evidence="2">
    <location>
        <begin position="70"/>
        <end position="96"/>
    </location>
</feature>
<feature type="region of interest" description="Disordered" evidence="2">
    <location>
        <begin position="271"/>
        <end position="320"/>
    </location>
</feature>
<feature type="region of interest" description="Disordered" evidence="2">
    <location>
        <begin position="387"/>
        <end position="486"/>
    </location>
</feature>
<feature type="compositionally biased region" description="Polar residues" evidence="2">
    <location>
        <begin position="83"/>
        <end position="96"/>
    </location>
</feature>
<feature type="compositionally biased region" description="Pro residues" evidence="2">
    <location>
        <begin position="271"/>
        <end position="282"/>
    </location>
</feature>
<feature type="compositionally biased region" description="Low complexity" evidence="2">
    <location>
        <begin position="292"/>
        <end position="306"/>
    </location>
</feature>
<feature type="compositionally biased region" description="Polar residues" evidence="2">
    <location>
        <begin position="398"/>
        <end position="407"/>
    </location>
</feature>
<feature type="compositionally biased region" description="Polar residues" evidence="2">
    <location>
        <begin position="440"/>
        <end position="450"/>
    </location>
</feature>
<feature type="compositionally biased region" description="Basic and acidic residues" evidence="2">
    <location>
        <begin position="460"/>
        <end position="474"/>
    </location>
</feature>
<proteinExistence type="inferred from homology"/>
<accession>Q0CH31</accession>